<protein>
    <recommendedName>
        <fullName evidence="1">Non-structural protein 1</fullName>
        <shortName evidence="1">NSP1</shortName>
    </recommendedName>
    <alternativeName>
        <fullName evidence="1">NCVP2</fullName>
    </alternativeName>
    <alternativeName>
        <fullName evidence="1">Non-structural RNA-binding protein 53</fullName>
        <shortName evidence="1">NS53</shortName>
    </alternativeName>
</protein>
<name>NSP1_ROTAP</name>
<dbReference type="EMBL" id="DQ838595">
    <property type="protein sequence ID" value="ABG75769.1"/>
    <property type="molecule type" value="Genomic_RNA"/>
</dbReference>
<dbReference type="GO" id="GO:0030430">
    <property type="term" value="C:host cell cytoplasm"/>
    <property type="evidence" value="ECO:0007669"/>
    <property type="project" value="UniProtKB-UniRule"/>
</dbReference>
<dbReference type="GO" id="GO:0044163">
    <property type="term" value="C:host cytoskeleton"/>
    <property type="evidence" value="ECO:0007669"/>
    <property type="project" value="UniProtKB-SubCell"/>
</dbReference>
<dbReference type="GO" id="GO:0046872">
    <property type="term" value="F:metal ion binding"/>
    <property type="evidence" value="ECO:0007669"/>
    <property type="project" value="UniProtKB-UniRule"/>
</dbReference>
<dbReference type="GO" id="GO:0003723">
    <property type="term" value="F:RNA binding"/>
    <property type="evidence" value="ECO:0007669"/>
    <property type="project" value="UniProtKB-UniRule"/>
</dbReference>
<dbReference type="GO" id="GO:0039548">
    <property type="term" value="P:symbiont-mediated suppression of host cytoplasmic pattern recognition receptor signaling pathway via inhibition of IRF3 activity"/>
    <property type="evidence" value="ECO:0007669"/>
    <property type="project" value="UniProtKB-UniRule"/>
</dbReference>
<dbReference type="GO" id="GO:0039557">
    <property type="term" value="P:symbiont-mediated suppression of host cytoplasmic pattern recognition receptor signaling pathway via inhibition of IRF7 activity"/>
    <property type="evidence" value="ECO:0007669"/>
    <property type="project" value="UniProtKB-UniRule"/>
</dbReference>
<dbReference type="HAMAP" id="MF_04088">
    <property type="entry name" value="ROTA_NSP1"/>
    <property type="match status" value="1"/>
</dbReference>
<dbReference type="InterPro" id="IPR002148">
    <property type="entry name" value="Rotavirus_NSP1"/>
</dbReference>
<dbReference type="Pfam" id="PF00981">
    <property type="entry name" value="Rota_NS53"/>
    <property type="match status" value="1"/>
</dbReference>
<accession>A2T3M0</accession>
<organismHost>
    <name type="scientific">Bos taurus</name>
    <name type="common">Bovine</name>
    <dbReference type="NCBI Taxonomy" id="9913"/>
</organismHost>
<sequence length="491" mass="58660">MATFKDACYHYRKISKLNSSILKLGANDEWRPAPITKFKGWCLDCCQYTNLTYCRGCALYHVCQWCSQYNRCFLDEEPHLLRMRTFKNTISKEDIENLLNMYDTLFPIHEKIVNKFINNVKQRKCRNEYLLEWYNHLLLPFTLQALTIQLENNTYYIFGYYDCMEQENQTPFNFVNLVSNYDKLLLDDKNFNRMAYLPPILQQEYALRYFSKSRFLDKPNRGLKRNDFSDNLMEDRHSPTSLMQVIRNCVAKHLDDSEWNKACTQVTNAKNYMEVMNSAYTEHYSVSQRCKLYTKNKLNTLSRLTKPNYILSNHETCALNVHNCKWCQITSCYKIWEDFRIKKIYNNVLDFIRALSKSNGMAGHCSSQERIYRYIPKLFLIYDEEQWTESVNSLFKCLEPVEISEVEYVLFDHEINWEVRGLILQCMNGSIPRILNLSDVRLILSSLIYDWFDIRYMRDTPMITSTTNELRKLNKKNELIDEYDLELSDIE</sequence>
<feature type="chain" id="PRO_0000369067" description="Non-structural protein 1">
    <location>
        <begin position="1"/>
        <end position="491"/>
    </location>
</feature>
<feature type="region of interest" description="RNA-binding" evidence="1">
    <location>
        <begin position="1"/>
        <end position="81"/>
    </location>
</feature>
<feature type="region of interest" description="Zinc-binding domain" evidence="1">
    <location>
        <begin position="42"/>
        <end position="79"/>
    </location>
</feature>
<feature type="region of interest" description="Important for cytoskeleton localization" evidence="1">
    <location>
        <begin position="82"/>
        <end position="176"/>
    </location>
</feature>
<feature type="region of interest" description="Interaction with host IRF3" evidence="1">
    <location>
        <begin position="320"/>
        <end position="491"/>
    </location>
</feature>
<feature type="short sequence motif" description="pLxIS motif" evidence="1">
    <location>
        <begin position="485"/>
        <end position="488"/>
    </location>
</feature>
<evidence type="ECO:0000255" key="1">
    <source>
        <dbReference type="HAMAP-Rule" id="MF_04088"/>
    </source>
</evidence>
<reference key="1">
    <citation type="journal article" date="2007" name="Virology">
        <title>Genome heterogeneity of SA11 rotavirus due to reassortment with 'O' agent.</title>
        <authorList>
            <person name="Small C."/>
            <person name="Barro M."/>
            <person name="Brown T.L."/>
            <person name="Patton J.T."/>
        </authorList>
    </citation>
    <scope>NUCLEOTIDE SEQUENCE [GENOMIC RNA]</scope>
</reference>
<comment type="function">
    <text evidence="1">Plays a role in the inhibition of host innate immunity by inducing the degradation of key host factors required to activate interferon production such as IRF3, IRF5 or IRF7. Associates with components of cullin RING ligases (CRLs) including CUL1 or CUL3, which are essential multisubunit ubiquitination complexes, to modulate their activities.</text>
</comment>
<comment type="subunit">
    <text evidence="1">Interacts (via C-terminus) with host IRF3; this interaction leads to IRF3 degradation. Interacts with host IRF7; this interaction leads to IRF7 degradation. Interacts with host CUL1 and CUL3.</text>
</comment>
<comment type="subcellular location">
    <subcellularLocation>
        <location evidence="1">Host cytoplasm</location>
        <location evidence="1">Host cytoskeleton</location>
    </subcellularLocation>
</comment>
<comment type="domain">
    <text evidence="1">The integrity of the zinc-binding domain in NSP1 is important for degradation of host IRF3.</text>
</comment>
<comment type="domain">
    <text evidence="1">The pLxIS motif targets host IRF3 for degradation; however phosphorylation of NSP1 pLxIS motif is not required for its activity.</text>
</comment>
<comment type="similarity">
    <text evidence="1">Belongs to the rotavirus NSP1 family.</text>
</comment>
<keyword id="KW-1035">Host cytoplasm</keyword>
<keyword id="KW-1037">Host cytoskeleton</keyword>
<keyword id="KW-0945">Host-virus interaction</keyword>
<keyword id="KW-1090">Inhibition of host innate immune response by virus</keyword>
<keyword id="KW-1092">Inhibition of host IRF3 by virus</keyword>
<keyword id="KW-1093">Inhibition of host IRF7 by virus</keyword>
<keyword id="KW-1113">Inhibition of host RLR pathway by virus</keyword>
<keyword id="KW-0922">Interferon antiviral system evasion</keyword>
<keyword id="KW-0479">Metal-binding</keyword>
<keyword id="KW-0694">RNA-binding</keyword>
<keyword id="KW-0899">Viral immunoevasion</keyword>
<proteinExistence type="inferred from homology"/>
<organism>
    <name type="scientific">Rotavirus A (isolate RVA/Cow/South/Africa/Offal agent/1965/G8P6[1])</name>
    <name type="common">RV-A</name>
    <dbReference type="NCBI Taxonomy" id="578837"/>
    <lineage>
        <taxon>Viruses</taxon>
        <taxon>Riboviria</taxon>
        <taxon>Orthornavirae</taxon>
        <taxon>Duplornaviricota</taxon>
        <taxon>Resentoviricetes</taxon>
        <taxon>Reovirales</taxon>
        <taxon>Sedoreoviridae</taxon>
        <taxon>Rotavirus</taxon>
        <taxon>Rotavirus A</taxon>
    </lineage>
</organism>